<feature type="chain" id="PRO_1000065730" description="N-succinylarginine dihydrolase">
    <location>
        <begin position="1"/>
        <end position="448"/>
    </location>
</feature>
<feature type="active site" evidence="1">
    <location>
        <position position="174"/>
    </location>
</feature>
<feature type="active site" evidence="1">
    <location>
        <position position="250"/>
    </location>
</feature>
<feature type="active site" description="Nucleophile" evidence="1">
    <location>
        <position position="371"/>
    </location>
</feature>
<feature type="binding site" evidence="1">
    <location>
        <begin position="19"/>
        <end position="28"/>
    </location>
    <ligand>
        <name>substrate</name>
    </ligand>
</feature>
<feature type="binding site" evidence="1">
    <location>
        <position position="110"/>
    </location>
    <ligand>
        <name>substrate</name>
    </ligand>
</feature>
<feature type="binding site" evidence="1">
    <location>
        <begin position="137"/>
        <end position="138"/>
    </location>
    <ligand>
        <name>substrate</name>
    </ligand>
</feature>
<feature type="binding site" evidence="1">
    <location>
        <position position="214"/>
    </location>
    <ligand>
        <name>substrate</name>
    </ligand>
</feature>
<feature type="binding site" evidence="1">
    <location>
        <position position="252"/>
    </location>
    <ligand>
        <name>substrate</name>
    </ligand>
</feature>
<feature type="binding site" evidence="1">
    <location>
        <position position="365"/>
    </location>
    <ligand>
        <name>substrate</name>
    </ligand>
</feature>
<proteinExistence type="inferred from homology"/>
<organism>
    <name type="scientific">Pseudomonas aeruginosa (strain UCBPP-PA14)</name>
    <dbReference type="NCBI Taxonomy" id="208963"/>
    <lineage>
        <taxon>Bacteria</taxon>
        <taxon>Pseudomonadati</taxon>
        <taxon>Pseudomonadota</taxon>
        <taxon>Gammaproteobacteria</taxon>
        <taxon>Pseudomonadales</taxon>
        <taxon>Pseudomonadaceae</taxon>
        <taxon>Pseudomonas</taxon>
    </lineage>
</organism>
<protein>
    <recommendedName>
        <fullName evidence="1">N-succinylarginine dihydrolase</fullName>
        <ecNumber evidence="1">3.5.3.23</ecNumber>
    </recommendedName>
</protein>
<accession>Q02I59</accession>
<dbReference type="EC" id="3.5.3.23" evidence="1"/>
<dbReference type="EMBL" id="CP000438">
    <property type="protein sequence ID" value="ABJ10059.1"/>
    <property type="molecule type" value="Genomic_DNA"/>
</dbReference>
<dbReference type="RefSeq" id="WP_003140816.1">
    <property type="nucleotide sequence ID" value="NZ_CP034244.1"/>
</dbReference>
<dbReference type="SMR" id="Q02I59"/>
<dbReference type="KEGG" id="pau:PA14_52660"/>
<dbReference type="PseudoCAP" id="PA14_52660"/>
<dbReference type="HOGENOM" id="CLU_053835_0_0_6"/>
<dbReference type="BioCyc" id="PAER208963:G1G74-4431-MONOMER"/>
<dbReference type="UniPathway" id="UPA00185">
    <property type="reaction ID" value="UER00280"/>
</dbReference>
<dbReference type="Proteomes" id="UP000000653">
    <property type="component" value="Chromosome"/>
</dbReference>
<dbReference type="GO" id="GO:0009015">
    <property type="term" value="F:N-succinylarginine dihydrolase activity"/>
    <property type="evidence" value="ECO:0007669"/>
    <property type="project" value="UniProtKB-UniRule"/>
</dbReference>
<dbReference type="GO" id="GO:0019544">
    <property type="term" value="P:arginine catabolic process to glutamate"/>
    <property type="evidence" value="ECO:0007669"/>
    <property type="project" value="UniProtKB-UniRule"/>
</dbReference>
<dbReference type="GO" id="GO:0019545">
    <property type="term" value="P:arginine catabolic process to succinate"/>
    <property type="evidence" value="ECO:0007669"/>
    <property type="project" value="UniProtKB-UniRule"/>
</dbReference>
<dbReference type="FunFam" id="3.75.10.20:FF:000001">
    <property type="entry name" value="N-succinylarginine dihydrolase"/>
    <property type="match status" value="1"/>
</dbReference>
<dbReference type="Gene3D" id="3.75.10.20">
    <property type="entry name" value="Succinylarginine dihydrolase"/>
    <property type="match status" value="1"/>
</dbReference>
<dbReference type="HAMAP" id="MF_01172">
    <property type="entry name" value="AstB"/>
    <property type="match status" value="1"/>
</dbReference>
<dbReference type="InterPro" id="IPR037031">
    <property type="entry name" value="AstB_sf"/>
</dbReference>
<dbReference type="InterPro" id="IPR007079">
    <property type="entry name" value="SuccinylArg_d-Hdrlase_AstB"/>
</dbReference>
<dbReference type="NCBIfam" id="TIGR03241">
    <property type="entry name" value="arg_catab_astB"/>
    <property type="match status" value="1"/>
</dbReference>
<dbReference type="NCBIfam" id="NF009789">
    <property type="entry name" value="PRK13281.1"/>
    <property type="match status" value="1"/>
</dbReference>
<dbReference type="PANTHER" id="PTHR30420">
    <property type="entry name" value="N-SUCCINYLARGININE DIHYDROLASE"/>
    <property type="match status" value="1"/>
</dbReference>
<dbReference type="PANTHER" id="PTHR30420:SF2">
    <property type="entry name" value="N-SUCCINYLARGININE DIHYDROLASE"/>
    <property type="match status" value="1"/>
</dbReference>
<dbReference type="Pfam" id="PF04996">
    <property type="entry name" value="AstB"/>
    <property type="match status" value="1"/>
</dbReference>
<dbReference type="SUPFAM" id="SSF55909">
    <property type="entry name" value="Pentein"/>
    <property type="match status" value="1"/>
</dbReference>
<reference key="1">
    <citation type="journal article" date="2006" name="Genome Biol.">
        <title>Genomic analysis reveals that Pseudomonas aeruginosa virulence is combinatorial.</title>
        <authorList>
            <person name="Lee D.G."/>
            <person name="Urbach J.M."/>
            <person name="Wu G."/>
            <person name="Liberati N.T."/>
            <person name="Feinbaum R.L."/>
            <person name="Miyata S."/>
            <person name="Diggins L.T."/>
            <person name="He J."/>
            <person name="Saucier M."/>
            <person name="Deziel E."/>
            <person name="Friedman L."/>
            <person name="Li L."/>
            <person name="Grills G."/>
            <person name="Montgomery K."/>
            <person name="Kucherlapati R."/>
            <person name="Rahme L.G."/>
            <person name="Ausubel F.M."/>
        </authorList>
    </citation>
    <scope>NUCLEOTIDE SEQUENCE [LARGE SCALE GENOMIC DNA]</scope>
    <source>
        <strain>UCBPP-PA14</strain>
    </source>
</reference>
<keyword id="KW-0056">Arginine metabolism</keyword>
<keyword id="KW-0378">Hydrolase</keyword>
<sequence>MNAHEVNFDGLVGPTHNYGGLSYGNVASQSNSQAVSNPKEAAKQGLAKMKALMEMGFKQGVLAPQARPDTAALRSLGFSGSDEEVIRRAAKEAMPLLAACSSASSMWTANAATVSPSADTADGRVHFTAANLNCKFHRSIEHPTTSRVLAAMFNDERYFAHHAALPAVSQFGDEGAANHTRFCKDYGDAGVEFFVFGRSAFDSRFPAPQRYPARQTLEACQAVARLHGLSEAGVVYAQQNPAVIDQGVFHNDVISVGNGEVLFHHEDAFLDTEKVLAELHDKLGRRGGRFRAICVPRDQVAVEDAVKSYLFNSQLLSKADGSMLLVVPEECRNNPRVWNYLDQLTGDDGPIREVKVFDLKQSMQNGGGPACLRLRVALQERELAAVNPGVIMSAGLYDTLVAWVDRHYRDRLSETDLADPQLLLECRTALDELTQILKLGSVYSFQLD</sequence>
<name>ASTB_PSEAB</name>
<comment type="function">
    <text evidence="1">Catalyzes the hydrolysis of N(2)-succinylarginine into N(2)-succinylornithine, ammonia and CO(2).</text>
</comment>
<comment type="catalytic activity">
    <reaction evidence="1">
        <text>N(2)-succinyl-L-arginine + 2 H2O + 2 H(+) = N(2)-succinyl-L-ornithine + 2 NH4(+) + CO2</text>
        <dbReference type="Rhea" id="RHEA:19533"/>
        <dbReference type="ChEBI" id="CHEBI:15377"/>
        <dbReference type="ChEBI" id="CHEBI:15378"/>
        <dbReference type="ChEBI" id="CHEBI:16526"/>
        <dbReference type="ChEBI" id="CHEBI:28938"/>
        <dbReference type="ChEBI" id="CHEBI:58241"/>
        <dbReference type="ChEBI" id="CHEBI:58514"/>
        <dbReference type="EC" id="3.5.3.23"/>
    </reaction>
</comment>
<comment type="pathway">
    <text evidence="1">Amino-acid degradation; L-arginine degradation via AST pathway; L-glutamate and succinate from L-arginine: step 2/5.</text>
</comment>
<comment type="subunit">
    <text evidence="1">Homodimer.</text>
</comment>
<comment type="similarity">
    <text evidence="1">Belongs to the succinylarginine dihydrolase family.</text>
</comment>
<gene>
    <name evidence="1" type="primary">astB</name>
    <name type="ordered locus">PA14_52660</name>
</gene>
<evidence type="ECO:0000255" key="1">
    <source>
        <dbReference type="HAMAP-Rule" id="MF_01172"/>
    </source>
</evidence>